<comment type="subunit">
    <text evidence="1">Part of the 50S ribosomal subunit. Contacts protein L32.</text>
</comment>
<comment type="similarity">
    <text evidence="1">Belongs to the bacterial ribosomal protein bL17 family.</text>
</comment>
<evidence type="ECO:0000255" key="1">
    <source>
        <dbReference type="HAMAP-Rule" id="MF_01368"/>
    </source>
</evidence>
<evidence type="ECO:0000305" key="2"/>
<accession>B1MVY9</accession>
<proteinExistence type="inferred from homology"/>
<protein>
    <recommendedName>
        <fullName evidence="1">Large ribosomal subunit protein bL17</fullName>
    </recommendedName>
    <alternativeName>
        <fullName evidence="2">50S ribosomal protein L17</fullName>
    </alternativeName>
</protein>
<name>RL17_LEUCK</name>
<reference key="1">
    <citation type="journal article" date="2008" name="J. Bacteriol.">
        <title>Complete genome sequence of Leuconostoc citreum KM20.</title>
        <authorList>
            <person name="Kim J.F."/>
            <person name="Jeong H."/>
            <person name="Lee J.-S."/>
            <person name="Choi S.-H."/>
            <person name="Ha M."/>
            <person name="Hur C.-G."/>
            <person name="Kim J.-S."/>
            <person name="Lee S."/>
            <person name="Park H.-S."/>
            <person name="Park Y.-H."/>
            <person name="Oh T.K."/>
        </authorList>
    </citation>
    <scope>NUCLEOTIDE SEQUENCE [LARGE SCALE GENOMIC DNA]</scope>
    <source>
        <strain>KM20</strain>
    </source>
</reference>
<dbReference type="EMBL" id="DQ489736">
    <property type="protein sequence ID" value="ACA83393.1"/>
    <property type="molecule type" value="Genomic_DNA"/>
</dbReference>
<dbReference type="RefSeq" id="WP_004899394.1">
    <property type="nucleotide sequence ID" value="NC_010471.1"/>
</dbReference>
<dbReference type="SMR" id="B1MVY9"/>
<dbReference type="STRING" id="349519.LCK_01570"/>
<dbReference type="GeneID" id="64345591"/>
<dbReference type="KEGG" id="lci:LCK_01570"/>
<dbReference type="eggNOG" id="COG0203">
    <property type="taxonomic scope" value="Bacteria"/>
</dbReference>
<dbReference type="HOGENOM" id="CLU_074407_2_2_9"/>
<dbReference type="OrthoDB" id="9809073at2"/>
<dbReference type="Proteomes" id="UP000002166">
    <property type="component" value="Chromosome"/>
</dbReference>
<dbReference type="GO" id="GO:0022625">
    <property type="term" value="C:cytosolic large ribosomal subunit"/>
    <property type="evidence" value="ECO:0007669"/>
    <property type="project" value="TreeGrafter"/>
</dbReference>
<dbReference type="GO" id="GO:0003735">
    <property type="term" value="F:structural constituent of ribosome"/>
    <property type="evidence" value="ECO:0007669"/>
    <property type="project" value="InterPro"/>
</dbReference>
<dbReference type="GO" id="GO:0006412">
    <property type="term" value="P:translation"/>
    <property type="evidence" value="ECO:0007669"/>
    <property type="project" value="UniProtKB-UniRule"/>
</dbReference>
<dbReference type="FunFam" id="3.90.1030.10:FF:000002">
    <property type="entry name" value="50S ribosomal protein L17"/>
    <property type="match status" value="1"/>
</dbReference>
<dbReference type="Gene3D" id="3.90.1030.10">
    <property type="entry name" value="Ribosomal protein L17"/>
    <property type="match status" value="1"/>
</dbReference>
<dbReference type="HAMAP" id="MF_01368">
    <property type="entry name" value="Ribosomal_bL17"/>
    <property type="match status" value="1"/>
</dbReference>
<dbReference type="InterPro" id="IPR000456">
    <property type="entry name" value="Ribosomal_bL17"/>
</dbReference>
<dbReference type="InterPro" id="IPR047859">
    <property type="entry name" value="Ribosomal_bL17_CS"/>
</dbReference>
<dbReference type="InterPro" id="IPR036373">
    <property type="entry name" value="Ribosomal_bL17_sf"/>
</dbReference>
<dbReference type="NCBIfam" id="TIGR00059">
    <property type="entry name" value="L17"/>
    <property type="match status" value="1"/>
</dbReference>
<dbReference type="PANTHER" id="PTHR14413:SF16">
    <property type="entry name" value="LARGE RIBOSOMAL SUBUNIT PROTEIN BL17M"/>
    <property type="match status" value="1"/>
</dbReference>
<dbReference type="PANTHER" id="PTHR14413">
    <property type="entry name" value="RIBOSOMAL PROTEIN L17"/>
    <property type="match status" value="1"/>
</dbReference>
<dbReference type="Pfam" id="PF01196">
    <property type="entry name" value="Ribosomal_L17"/>
    <property type="match status" value="1"/>
</dbReference>
<dbReference type="SUPFAM" id="SSF64263">
    <property type="entry name" value="Prokaryotic ribosomal protein L17"/>
    <property type="match status" value="1"/>
</dbReference>
<dbReference type="PROSITE" id="PS01167">
    <property type="entry name" value="RIBOSOMAL_L17"/>
    <property type="match status" value="1"/>
</dbReference>
<keyword id="KW-1185">Reference proteome</keyword>
<keyword id="KW-0687">Ribonucleoprotein</keyword>
<keyword id="KW-0689">Ribosomal protein</keyword>
<sequence length="127" mass="14258">MPYRKLGRTSSQRKAMLRDLTTDLLINGRITTTEARAKEVRKTTDKMITLGKRGDLAARRQAAAFVRNEVADVIEDGDNVKVQSALQKLFDDVAPRFAERNGGYTRILKTVQRRGDAAQLVILELVD</sequence>
<gene>
    <name evidence="1" type="primary">rplQ</name>
    <name type="ordered locus">LCK_01570</name>
</gene>
<feature type="chain" id="PRO_1000144444" description="Large ribosomal subunit protein bL17">
    <location>
        <begin position="1"/>
        <end position="127"/>
    </location>
</feature>
<organism>
    <name type="scientific">Leuconostoc citreum (strain KM20)</name>
    <dbReference type="NCBI Taxonomy" id="349519"/>
    <lineage>
        <taxon>Bacteria</taxon>
        <taxon>Bacillati</taxon>
        <taxon>Bacillota</taxon>
        <taxon>Bacilli</taxon>
        <taxon>Lactobacillales</taxon>
        <taxon>Lactobacillaceae</taxon>
        <taxon>Leuconostoc</taxon>
    </lineage>
</organism>